<name>RIMO_PARDP</name>
<feature type="chain" id="PRO_0000374912" description="Ribosomal protein uS12 methylthiotransferase RimO">
    <location>
        <begin position="1"/>
        <end position="463"/>
    </location>
</feature>
<feature type="domain" description="MTTase N-terminal" evidence="1">
    <location>
        <begin position="30"/>
        <end position="140"/>
    </location>
</feature>
<feature type="domain" description="Radical SAM core" evidence="2">
    <location>
        <begin position="157"/>
        <end position="395"/>
    </location>
</feature>
<feature type="domain" description="TRAM" evidence="1">
    <location>
        <begin position="398"/>
        <end position="463"/>
    </location>
</feature>
<feature type="region of interest" description="Disordered" evidence="3">
    <location>
        <begin position="1"/>
        <end position="26"/>
    </location>
</feature>
<feature type="compositionally biased region" description="Low complexity" evidence="3">
    <location>
        <begin position="8"/>
        <end position="19"/>
    </location>
</feature>
<feature type="binding site" evidence="1">
    <location>
        <position position="39"/>
    </location>
    <ligand>
        <name>[4Fe-4S] cluster</name>
        <dbReference type="ChEBI" id="CHEBI:49883"/>
        <label>1</label>
    </ligand>
</feature>
<feature type="binding site" evidence="1">
    <location>
        <position position="75"/>
    </location>
    <ligand>
        <name>[4Fe-4S] cluster</name>
        <dbReference type="ChEBI" id="CHEBI:49883"/>
        <label>1</label>
    </ligand>
</feature>
<feature type="binding site" evidence="1">
    <location>
        <position position="104"/>
    </location>
    <ligand>
        <name>[4Fe-4S] cluster</name>
        <dbReference type="ChEBI" id="CHEBI:49883"/>
        <label>1</label>
    </ligand>
</feature>
<feature type="binding site" evidence="1">
    <location>
        <position position="171"/>
    </location>
    <ligand>
        <name>[4Fe-4S] cluster</name>
        <dbReference type="ChEBI" id="CHEBI:49883"/>
        <label>2</label>
        <note>4Fe-4S-S-AdoMet</note>
    </ligand>
</feature>
<feature type="binding site" evidence="1">
    <location>
        <position position="175"/>
    </location>
    <ligand>
        <name>[4Fe-4S] cluster</name>
        <dbReference type="ChEBI" id="CHEBI:49883"/>
        <label>2</label>
        <note>4Fe-4S-S-AdoMet</note>
    </ligand>
</feature>
<feature type="binding site" evidence="1">
    <location>
        <position position="178"/>
    </location>
    <ligand>
        <name>[4Fe-4S] cluster</name>
        <dbReference type="ChEBI" id="CHEBI:49883"/>
        <label>2</label>
        <note>4Fe-4S-S-AdoMet</note>
    </ligand>
</feature>
<evidence type="ECO:0000255" key="1">
    <source>
        <dbReference type="HAMAP-Rule" id="MF_01865"/>
    </source>
</evidence>
<evidence type="ECO:0000255" key="2">
    <source>
        <dbReference type="PROSITE-ProRule" id="PRU01266"/>
    </source>
</evidence>
<evidence type="ECO:0000256" key="3">
    <source>
        <dbReference type="SAM" id="MobiDB-lite"/>
    </source>
</evidence>
<keyword id="KW-0004">4Fe-4S</keyword>
<keyword id="KW-0963">Cytoplasm</keyword>
<keyword id="KW-0408">Iron</keyword>
<keyword id="KW-0411">Iron-sulfur</keyword>
<keyword id="KW-0479">Metal-binding</keyword>
<keyword id="KW-1185">Reference proteome</keyword>
<keyword id="KW-0949">S-adenosyl-L-methionine</keyword>
<keyword id="KW-0808">Transferase</keyword>
<proteinExistence type="inferred from homology"/>
<organism>
    <name type="scientific">Paracoccus denitrificans (strain Pd 1222)</name>
    <dbReference type="NCBI Taxonomy" id="318586"/>
    <lineage>
        <taxon>Bacteria</taxon>
        <taxon>Pseudomonadati</taxon>
        <taxon>Pseudomonadota</taxon>
        <taxon>Alphaproteobacteria</taxon>
        <taxon>Rhodobacterales</taxon>
        <taxon>Paracoccaceae</taxon>
        <taxon>Paracoccus</taxon>
    </lineage>
</organism>
<reference key="1">
    <citation type="submission" date="2006-12" db="EMBL/GenBank/DDBJ databases">
        <title>Complete sequence of chromosome 1 of Paracoccus denitrificans PD1222.</title>
        <authorList>
            <person name="Copeland A."/>
            <person name="Lucas S."/>
            <person name="Lapidus A."/>
            <person name="Barry K."/>
            <person name="Detter J.C."/>
            <person name="Glavina del Rio T."/>
            <person name="Hammon N."/>
            <person name="Israni S."/>
            <person name="Dalin E."/>
            <person name="Tice H."/>
            <person name="Pitluck S."/>
            <person name="Munk A.C."/>
            <person name="Brettin T."/>
            <person name="Bruce D."/>
            <person name="Han C."/>
            <person name="Tapia R."/>
            <person name="Gilna P."/>
            <person name="Schmutz J."/>
            <person name="Larimer F."/>
            <person name="Land M."/>
            <person name="Hauser L."/>
            <person name="Kyrpides N."/>
            <person name="Lykidis A."/>
            <person name="Spiro S."/>
            <person name="Richardson D.J."/>
            <person name="Moir J.W.B."/>
            <person name="Ferguson S.J."/>
            <person name="van Spanning R.J.M."/>
            <person name="Richardson P."/>
        </authorList>
    </citation>
    <scope>NUCLEOTIDE SEQUENCE [LARGE SCALE GENOMIC DNA]</scope>
    <source>
        <strain>Pd 1222</strain>
    </source>
</reference>
<accession>A1B3K8</accession>
<gene>
    <name evidence="1" type="primary">rimO</name>
    <name type="ordered locus">Pden_2010</name>
</gene>
<comment type="function">
    <text evidence="1">Catalyzes the methylthiolation of an aspartic acid residue of ribosomal protein uS12.</text>
</comment>
<comment type="catalytic activity">
    <reaction evidence="1">
        <text>L-aspartate(89)-[ribosomal protein uS12]-hydrogen + (sulfur carrier)-SH + AH2 + 2 S-adenosyl-L-methionine = 3-methylsulfanyl-L-aspartate(89)-[ribosomal protein uS12]-hydrogen + (sulfur carrier)-H + 5'-deoxyadenosine + L-methionine + A + S-adenosyl-L-homocysteine + 2 H(+)</text>
        <dbReference type="Rhea" id="RHEA:37087"/>
        <dbReference type="Rhea" id="RHEA-COMP:10460"/>
        <dbReference type="Rhea" id="RHEA-COMP:10461"/>
        <dbReference type="Rhea" id="RHEA-COMP:14737"/>
        <dbReference type="Rhea" id="RHEA-COMP:14739"/>
        <dbReference type="ChEBI" id="CHEBI:13193"/>
        <dbReference type="ChEBI" id="CHEBI:15378"/>
        <dbReference type="ChEBI" id="CHEBI:17319"/>
        <dbReference type="ChEBI" id="CHEBI:17499"/>
        <dbReference type="ChEBI" id="CHEBI:29917"/>
        <dbReference type="ChEBI" id="CHEBI:29961"/>
        <dbReference type="ChEBI" id="CHEBI:57844"/>
        <dbReference type="ChEBI" id="CHEBI:57856"/>
        <dbReference type="ChEBI" id="CHEBI:59789"/>
        <dbReference type="ChEBI" id="CHEBI:64428"/>
        <dbReference type="ChEBI" id="CHEBI:73599"/>
        <dbReference type="EC" id="2.8.4.4"/>
    </reaction>
</comment>
<comment type="cofactor">
    <cofactor evidence="1">
        <name>[4Fe-4S] cluster</name>
        <dbReference type="ChEBI" id="CHEBI:49883"/>
    </cofactor>
    <text evidence="1">Binds 2 [4Fe-4S] clusters. One cluster is coordinated with 3 cysteines and an exchangeable S-adenosyl-L-methionine.</text>
</comment>
<comment type="subcellular location">
    <subcellularLocation>
        <location evidence="1">Cytoplasm</location>
    </subcellularLocation>
</comment>
<comment type="similarity">
    <text evidence="1">Belongs to the methylthiotransferase family. RimO subfamily.</text>
</comment>
<protein>
    <recommendedName>
        <fullName evidence="1">Ribosomal protein uS12 methylthiotransferase RimO</fullName>
        <shortName evidence="1">uS12 MTTase</shortName>
        <shortName evidence="1">uS12 methylthiotransferase</shortName>
        <ecNumber evidence="1">2.8.4.4</ecNumber>
    </recommendedName>
    <alternativeName>
        <fullName evidence="1">Ribosomal protein uS12 (aspartate-C(3))-methylthiotransferase</fullName>
    </alternativeName>
    <alternativeName>
        <fullName evidence="1">Ribosome maturation factor RimO</fullName>
    </alternativeName>
</protein>
<dbReference type="EC" id="2.8.4.4" evidence="1"/>
<dbReference type="EMBL" id="CP000489">
    <property type="protein sequence ID" value="ABL70102.1"/>
    <property type="molecule type" value="Genomic_DNA"/>
</dbReference>
<dbReference type="SMR" id="A1B3K8"/>
<dbReference type="STRING" id="318586.Pden_2010"/>
<dbReference type="EnsemblBacteria" id="ABL70102">
    <property type="protein sequence ID" value="ABL70102"/>
    <property type="gene ID" value="Pden_2010"/>
</dbReference>
<dbReference type="KEGG" id="pde:Pden_2010"/>
<dbReference type="eggNOG" id="COG0621">
    <property type="taxonomic scope" value="Bacteria"/>
</dbReference>
<dbReference type="HOGENOM" id="CLU_018697_0_0_5"/>
<dbReference type="OrthoDB" id="9805215at2"/>
<dbReference type="Proteomes" id="UP000000361">
    <property type="component" value="Chromosome 1"/>
</dbReference>
<dbReference type="GO" id="GO:0005829">
    <property type="term" value="C:cytosol"/>
    <property type="evidence" value="ECO:0007669"/>
    <property type="project" value="TreeGrafter"/>
</dbReference>
<dbReference type="GO" id="GO:0051539">
    <property type="term" value="F:4 iron, 4 sulfur cluster binding"/>
    <property type="evidence" value="ECO:0007669"/>
    <property type="project" value="UniProtKB-UniRule"/>
</dbReference>
<dbReference type="GO" id="GO:0035599">
    <property type="term" value="F:aspartic acid methylthiotransferase activity"/>
    <property type="evidence" value="ECO:0007669"/>
    <property type="project" value="TreeGrafter"/>
</dbReference>
<dbReference type="GO" id="GO:0046872">
    <property type="term" value="F:metal ion binding"/>
    <property type="evidence" value="ECO:0007669"/>
    <property type="project" value="UniProtKB-KW"/>
</dbReference>
<dbReference type="GO" id="GO:0103039">
    <property type="term" value="F:protein methylthiotransferase activity"/>
    <property type="evidence" value="ECO:0007669"/>
    <property type="project" value="UniProtKB-EC"/>
</dbReference>
<dbReference type="GO" id="GO:0006400">
    <property type="term" value="P:tRNA modification"/>
    <property type="evidence" value="ECO:0007669"/>
    <property type="project" value="InterPro"/>
</dbReference>
<dbReference type="CDD" id="cd01335">
    <property type="entry name" value="Radical_SAM"/>
    <property type="match status" value="1"/>
</dbReference>
<dbReference type="FunFam" id="3.40.50.12160:FF:000002">
    <property type="entry name" value="Ribosomal protein S12 methylthiotransferase RimO"/>
    <property type="match status" value="1"/>
</dbReference>
<dbReference type="FunFam" id="3.80.30.20:FF:000001">
    <property type="entry name" value="tRNA-2-methylthio-N(6)-dimethylallyladenosine synthase 2"/>
    <property type="match status" value="1"/>
</dbReference>
<dbReference type="Gene3D" id="3.40.50.12160">
    <property type="entry name" value="Methylthiotransferase, N-terminal domain"/>
    <property type="match status" value="1"/>
</dbReference>
<dbReference type="Gene3D" id="2.40.50.140">
    <property type="entry name" value="Nucleic acid-binding proteins"/>
    <property type="match status" value="1"/>
</dbReference>
<dbReference type="Gene3D" id="3.80.30.20">
    <property type="entry name" value="tm_1862 like domain"/>
    <property type="match status" value="1"/>
</dbReference>
<dbReference type="HAMAP" id="MF_01865">
    <property type="entry name" value="MTTase_RimO"/>
    <property type="match status" value="1"/>
</dbReference>
<dbReference type="InterPro" id="IPR006638">
    <property type="entry name" value="Elp3/MiaA/NifB-like_rSAM"/>
</dbReference>
<dbReference type="InterPro" id="IPR005839">
    <property type="entry name" value="Methylthiotransferase"/>
</dbReference>
<dbReference type="InterPro" id="IPR013848">
    <property type="entry name" value="Methylthiotransferase_N"/>
</dbReference>
<dbReference type="InterPro" id="IPR038135">
    <property type="entry name" value="Methylthiotransferase_N_sf"/>
</dbReference>
<dbReference type="InterPro" id="IPR012340">
    <property type="entry name" value="NA-bd_OB-fold"/>
</dbReference>
<dbReference type="InterPro" id="IPR005840">
    <property type="entry name" value="Ribosomal_uS12_MeSTrfase_RimO"/>
</dbReference>
<dbReference type="InterPro" id="IPR007197">
    <property type="entry name" value="rSAM"/>
</dbReference>
<dbReference type="InterPro" id="IPR023404">
    <property type="entry name" value="rSAM_horseshoe"/>
</dbReference>
<dbReference type="InterPro" id="IPR002792">
    <property type="entry name" value="TRAM_dom"/>
</dbReference>
<dbReference type="NCBIfam" id="TIGR01125">
    <property type="entry name" value="30S ribosomal protein S12 methylthiotransferase RimO"/>
    <property type="match status" value="1"/>
</dbReference>
<dbReference type="NCBIfam" id="TIGR00089">
    <property type="entry name" value="MiaB/RimO family radical SAM methylthiotransferase"/>
    <property type="match status" value="1"/>
</dbReference>
<dbReference type="PANTHER" id="PTHR43837">
    <property type="entry name" value="RIBOSOMAL PROTEIN S12 METHYLTHIOTRANSFERASE RIMO"/>
    <property type="match status" value="1"/>
</dbReference>
<dbReference type="PANTHER" id="PTHR43837:SF1">
    <property type="entry name" value="RIBOSOMAL PROTEIN US12 METHYLTHIOTRANSFERASE RIMO"/>
    <property type="match status" value="1"/>
</dbReference>
<dbReference type="Pfam" id="PF04055">
    <property type="entry name" value="Radical_SAM"/>
    <property type="match status" value="1"/>
</dbReference>
<dbReference type="Pfam" id="PF18693">
    <property type="entry name" value="TRAM_2"/>
    <property type="match status" value="1"/>
</dbReference>
<dbReference type="Pfam" id="PF00919">
    <property type="entry name" value="UPF0004"/>
    <property type="match status" value="1"/>
</dbReference>
<dbReference type="SFLD" id="SFLDG01082">
    <property type="entry name" value="B12-binding_domain_containing"/>
    <property type="match status" value="1"/>
</dbReference>
<dbReference type="SFLD" id="SFLDS00029">
    <property type="entry name" value="Radical_SAM"/>
    <property type="match status" value="1"/>
</dbReference>
<dbReference type="SFLD" id="SFLDF00274">
    <property type="entry name" value="ribosomal_protein_S12_methylth"/>
    <property type="match status" value="1"/>
</dbReference>
<dbReference type="SMART" id="SM00729">
    <property type="entry name" value="Elp3"/>
    <property type="match status" value="1"/>
</dbReference>
<dbReference type="SUPFAM" id="SSF102114">
    <property type="entry name" value="Radical SAM enzymes"/>
    <property type="match status" value="1"/>
</dbReference>
<dbReference type="PROSITE" id="PS51449">
    <property type="entry name" value="MTTASE_N"/>
    <property type="match status" value="1"/>
</dbReference>
<dbReference type="PROSITE" id="PS51918">
    <property type="entry name" value="RADICAL_SAM"/>
    <property type="match status" value="1"/>
</dbReference>
<dbReference type="PROSITE" id="PS50926">
    <property type="entry name" value="TRAM"/>
    <property type="match status" value="1"/>
</dbReference>
<sequence length="463" mass="50455">MPAMSQNPPLLRPDLAPAPIFDTSRREGQPTIGMVSLGCPKALVDSERILTRLRAEGYAISPDYKGAGAVIVNTCGFLDSAKAESLQAIGEALAENGKVIVTGCLGAEPEYITGAHPSVLAVTGPQQYEQVLDAVHHAVPPSPDPFVDLLPASGVKLTPRHYSYLKISEGCNHACKFCIIPDMRGKLVSRPAHAVIREAEKLVEAGVRELLVISQDTSAYGLDRKFATERGHRAHITDLARDLGQLGAWVRLHYVYPYPHVRDLIPLMAAHGESGGLVLPYLDIPFQHAHPDVLKRMARPAAAARTLDEIAAWRAVCPDITLRSTFIVGYPGETEAEFQTLLDWLDEAQLDRVGCFQYENVKGARANDLPDHVPDDVKQDRWDRFMQKAQAISEAKLAAKVGHRIEVIVDAVDGDGATCRTKADAPEIDGNLFIDEGFEDLAPGDIVSVTVDEAGEYDLWGRL</sequence>